<evidence type="ECO:0000250" key="1"/>
<evidence type="ECO:0000255" key="2"/>
<evidence type="ECO:0000305" key="3"/>
<organism>
    <name type="scientific">Sus scrofa</name>
    <name type="common">Pig</name>
    <dbReference type="NCBI Taxonomy" id="9823"/>
    <lineage>
        <taxon>Eukaryota</taxon>
        <taxon>Metazoa</taxon>
        <taxon>Chordata</taxon>
        <taxon>Craniata</taxon>
        <taxon>Vertebrata</taxon>
        <taxon>Euteleostomi</taxon>
        <taxon>Mammalia</taxon>
        <taxon>Eutheria</taxon>
        <taxon>Laurasiatheria</taxon>
        <taxon>Artiodactyla</taxon>
        <taxon>Suina</taxon>
        <taxon>Suidae</taxon>
        <taxon>Sus</taxon>
    </lineage>
</organism>
<reference key="1">
    <citation type="journal article" date="2003" name="Protein Sci.">
        <title>Isolation and biochemical characterization of LEAP-2, a novel blood peptide expressed in the liver.</title>
        <authorList>
            <person name="Krause A."/>
            <person name="Sillard R."/>
            <person name="Kleemeier B."/>
            <person name="Kluever E."/>
            <person name="Maronde E."/>
            <person name="Conejo-Garcia J.-R."/>
            <person name="Forssmann W.-G."/>
            <person name="Schulz-Knappe P."/>
            <person name="Nehls M.C."/>
            <person name="Wattler F."/>
            <person name="Wattler S."/>
            <person name="Adermann K."/>
        </authorList>
    </citation>
    <scope>NUCLEOTIDE SEQUENCE [MRNA]</scope>
    <source>
        <tissue>Small intestine</tissue>
    </source>
</reference>
<feature type="signal peptide" evidence="2">
    <location>
        <begin position="1"/>
        <end position="22"/>
    </location>
</feature>
<feature type="propeptide" id="PRO_0000017361" evidence="2">
    <location>
        <begin position="23"/>
        <end position="37"/>
    </location>
</feature>
<feature type="chain" id="PRO_0000017362" description="Liver-expressed antimicrobial peptide 2">
    <location>
        <begin position="38"/>
        <end position="77"/>
    </location>
</feature>
<feature type="disulfide bond" evidence="1">
    <location>
        <begin position="54"/>
        <end position="65"/>
    </location>
</feature>
<feature type="disulfide bond" evidence="1">
    <location>
        <begin position="60"/>
        <end position="70"/>
    </location>
</feature>
<gene>
    <name type="primary">LEAP2</name>
</gene>
<comment type="function">
    <text>Has an antimicrobial activity.</text>
</comment>
<comment type="subcellular location">
    <subcellularLocation>
        <location>Secreted</location>
    </subcellularLocation>
</comment>
<comment type="similarity">
    <text evidence="3">Belongs to the LEAP2 family.</text>
</comment>
<proteinExistence type="inferred from homology"/>
<name>LEAP2_PIG</name>
<accession>Q95JB4</accession>
<keyword id="KW-0044">Antibiotic</keyword>
<keyword id="KW-0929">Antimicrobial</keyword>
<keyword id="KW-0165">Cleavage on pair of basic residues</keyword>
<keyword id="KW-1015">Disulfide bond</keyword>
<keyword id="KW-1185">Reference proteome</keyword>
<keyword id="KW-0964">Secreted</keyword>
<keyword id="KW-0732">Signal</keyword>
<sequence length="77" mass="8818">MWHLKLFAVLVICLLLAVQVHGSPIPELSSAKRRPRRMTPFWRAVSLRPIGASCRDDSECLTRLCRKRRCSLSVAQE</sequence>
<protein>
    <recommendedName>
        <fullName>Liver-expressed antimicrobial peptide 2</fullName>
        <shortName>LEAP-2</shortName>
    </recommendedName>
</protein>
<dbReference type="EMBL" id="AJ409013">
    <property type="protein sequence ID" value="CAC51475.1"/>
    <property type="molecule type" value="mRNA"/>
</dbReference>
<dbReference type="SMR" id="Q95JB4"/>
<dbReference type="FunCoup" id="Q95JB4">
    <property type="interactions" value="141"/>
</dbReference>
<dbReference type="STRING" id="9823.ENSSSCP00000066145"/>
<dbReference type="PaxDb" id="9823-ENSSSCP00000015201"/>
<dbReference type="eggNOG" id="ENOG502SD5B">
    <property type="taxonomic scope" value="Eukaryota"/>
</dbReference>
<dbReference type="InParanoid" id="Q95JB4"/>
<dbReference type="Proteomes" id="UP000008227">
    <property type="component" value="Unplaced"/>
</dbReference>
<dbReference type="Proteomes" id="UP000314985">
    <property type="component" value="Unplaced"/>
</dbReference>
<dbReference type="Proteomes" id="UP000694570">
    <property type="component" value="Unplaced"/>
</dbReference>
<dbReference type="Proteomes" id="UP000694571">
    <property type="component" value="Unplaced"/>
</dbReference>
<dbReference type="Proteomes" id="UP000694720">
    <property type="component" value="Unplaced"/>
</dbReference>
<dbReference type="Proteomes" id="UP000694722">
    <property type="component" value="Unplaced"/>
</dbReference>
<dbReference type="Proteomes" id="UP000694723">
    <property type="component" value="Unplaced"/>
</dbReference>
<dbReference type="Proteomes" id="UP000694724">
    <property type="component" value="Unplaced"/>
</dbReference>
<dbReference type="Proteomes" id="UP000694725">
    <property type="component" value="Unplaced"/>
</dbReference>
<dbReference type="Proteomes" id="UP000694726">
    <property type="component" value="Unplaced"/>
</dbReference>
<dbReference type="Proteomes" id="UP000694727">
    <property type="component" value="Unplaced"/>
</dbReference>
<dbReference type="Proteomes" id="UP000694728">
    <property type="component" value="Unplaced"/>
</dbReference>
<dbReference type="GO" id="GO:0005576">
    <property type="term" value="C:extracellular region"/>
    <property type="evidence" value="ECO:0007669"/>
    <property type="project" value="UniProtKB-SubCell"/>
</dbReference>
<dbReference type="GO" id="GO:0042742">
    <property type="term" value="P:defense response to bacterium"/>
    <property type="evidence" value="ECO:0007669"/>
    <property type="project" value="UniProtKB-KW"/>
</dbReference>
<dbReference type="FunFam" id="4.10.40.50:FF:000001">
    <property type="entry name" value="liver-expressed antimicrobial peptide 2"/>
    <property type="match status" value="1"/>
</dbReference>
<dbReference type="Gene3D" id="4.10.40.50">
    <property type="match status" value="1"/>
</dbReference>
<dbReference type="InterPro" id="IPR009955">
    <property type="entry name" value="LEAP-2"/>
</dbReference>
<dbReference type="PANTHER" id="PTHR21007">
    <property type="entry name" value="LIVER EXPRESSED ANTIMICROBIAL PEPTIDE 2"/>
    <property type="match status" value="1"/>
</dbReference>
<dbReference type="PANTHER" id="PTHR21007:SF1">
    <property type="entry name" value="LIVER-EXPRESSED ANTIMICROBIAL PEPTIDE 2"/>
    <property type="match status" value="1"/>
</dbReference>
<dbReference type="Pfam" id="PF07359">
    <property type="entry name" value="LEAP-2"/>
    <property type="match status" value="1"/>
</dbReference>